<gene>
    <name type="primary">ZFWD4</name>
    <name type="ordered locus">At5g49200</name>
    <name type="ORF">K21P3.7</name>
</gene>
<organism>
    <name type="scientific">Arabidopsis thaliana</name>
    <name type="common">Mouse-ear cress</name>
    <dbReference type="NCBI Taxonomy" id="3702"/>
    <lineage>
        <taxon>Eukaryota</taxon>
        <taxon>Viridiplantae</taxon>
        <taxon>Streptophyta</taxon>
        <taxon>Embryophyta</taxon>
        <taxon>Tracheophyta</taxon>
        <taxon>Spermatophyta</taxon>
        <taxon>Magnoliopsida</taxon>
        <taxon>eudicotyledons</taxon>
        <taxon>Gunneridae</taxon>
        <taxon>Pentapetalae</taxon>
        <taxon>rosids</taxon>
        <taxon>malvids</taxon>
        <taxon>Brassicales</taxon>
        <taxon>Brassicaceae</taxon>
        <taxon>Camelineae</taxon>
        <taxon>Arabidopsis</taxon>
    </lineage>
</organism>
<feature type="chain" id="PRO_0000372012" description="Zinc finger CCCH domain-containing protein 62">
    <location>
        <begin position="1"/>
        <end position="419"/>
    </location>
</feature>
<feature type="repeat" description="WD 1">
    <location>
        <begin position="129"/>
        <end position="168"/>
    </location>
</feature>
<feature type="repeat" description="WD 2">
    <location>
        <begin position="210"/>
        <end position="247"/>
    </location>
</feature>
<feature type="repeat" description="WD 3">
    <location>
        <begin position="256"/>
        <end position="293"/>
    </location>
</feature>
<feature type="repeat" description="WD 4">
    <location>
        <begin position="296"/>
        <end position="335"/>
    </location>
</feature>
<feature type="repeat" description="WD 5">
    <location>
        <begin position="383"/>
        <end position="419"/>
    </location>
</feature>
<feature type="zinc finger region" description="C3H1-type" evidence="1">
    <location>
        <begin position="89"/>
        <end position="116"/>
    </location>
</feature>
<accession>Q9FE91</accession>
<evidence type="ECO:0000255" key="1">
    <source>
        <dbReference type="PROSITE-ProRule" id="PRU00723"/>
    </source>
</evidence>
<proteinExistence type="evidence at transcript level"/>
<protein>
    <recommendedName>
        <fullName>Zinc finger CCCH domain-containing protein 62</fullName>
        <shortName>AtC3H62</shortName>
    </recommendedName>
    <alternativeName>
        <fullName>Zinc finger CCCH domain and WD40 repeat-containing protein 4</fullName>
    </alternativeName>
</protein>
<reference key="1">
    <citation type="journal article" date="2000" name="Gene">
        <title>ZFWD: a novel subfamily of plant proteins containing a C3H zinc finger and seven WD40 repeats.</title>
        <authorList>
            <person name="Terol J."/>
            <person name="Bargues M."/>
            <person name="Perez-Alonso M."/>
        </authorList>
    </citation>
    <scope>NUCLEOTIDE SEQUENCE [MRNA]</scope>
    <source>
        <strain>cv. Columbia</strain>
    </source>
</reference>
<reference key="2">
    <citation type="journal article" date="1998" name="DNA Res.">
        <title>Structural analysis of Arabidopsis thaliana chromosome 5. VIII. Sequence features of the regions of 1,081,958 bp covered by seventeen physically assigned P1 and TAC clones.</title>
        <authorList>
            <person name="Asamizu E."/>
            <person name="Sato S."/>
            <person name="Kaneko T."/>
            <person name="Nakamura Y."/>
            <person name="Kotani H."/>
            <person name="Miyajima N."/>
            <person name="Tabata S."/>
        </authorList>
    </citation>
    <scope>NUCLEOTIDE SEQUENCE [LARGE SCALE GENOMIC DNA]</scope>
    <source>
        <strain>cv. Columbia</strain>
    </source>
</reference>
<reference key="3">
    <citation type="journal article" date="2017" name="Plant J.">
        <title>Araport11: a complete reannotation of the Arabidopsis thaliana reference genome.</title>
        <authorList>
            <person name="Cheng C.Y."/>
            <person name="Krishnakumar V."/>
            <person name="Chan A.P."/>
            <person name="Thibaud-Nissen F."/>
            <person name="Schobel S."/>
            <person name="Town C.D."/>
        </authorList>
    </citation>
    <scope>GENOME REANNOTATION</scope>
    <source>
        <strain>cv. Columbia</strain>
    </source>
</reference>
<reference key="4">
    <citation type="journal article" date="2008" name="BMC Genomics">
        <title>Genome-wide analysis of CCCH zinc finger family in Arabidopsis and rice.</title>
        <authorList>
            <person name="Wang D."/>
            <person name="Guo Y."/>
            <person name="Wu C."/>
            <person name="Yang G."/>
            <person name="Li Y."/>
            <person name="Zheng C."/>
        </authorList>
    </citation>
    <scope>NOMENCLATURE</scope>
</reference>
<dbReference type="EMBL" id="AJ252066">
    <property type="protein sequence ID" value="CAC19850.1"/>
    <property type="molecule type" value="mRNA"/>
</dbReference>
<dbReference type="EMBL" id="AB016872">
    <property type="protein sequence ID" value="BAB10338.1"/>
    <property type="molecule type" value="Genomic_DNA"/>
</dbReference>
<dbReference type="EMBL" id="CP002688">
    <property type="protein sequence ID" value="AED95781.1"/>
    <property type="molecule type" value="Genomic_DNA"/>
</dbReference>
<dbReference type="RefSeq" id="NP_199731.1">
    <property type="nucleotide sequence ID" value="NM_124297.2"/>
</dbReference>
<dbReference type="SMR" id="Q9FE91"/>
<dbReference type="STRING" id="3702.Q9FE91"/>
<dbReference type="iPTMnet" id="Q9FE91"/>
<dbReference type="PaxDb" id="3702-AT5G49200.1"/>
<dbReference type="EnsemblPlants" id="AT5G49200.1">
    <property type="protein sequence ID" value="AT5G49200.1"/>
    <property type="gene ID" value="AT5G49200"/>
</dbReference>
<dbReference type="GeneID" id="834979"/>
<dbReference type="Gramene" id="AT5G49200.1">
    <property type="protein sequence ID" value="AT5G49200.1"/>
    <property type="gene ID" value="AT5G49200"/>
</dbReference>
<dbReference type="KEGG" id="ath:AT5G49200"/>
<dbReference type="Araport" id="AT5G49200"/>
<dbReference type="TAIR" id="AT5G49200"/>
<dbReference type="eggNOG" id="KOG0274">
    <property type="taxonomic scope" value="Eukaryota"/>
</dbReference>
<dbReference type="HOGENOM" id="CLU_037680_1_0_1"/>
<dbReference type="InParanoid" id="Q9FE91"/>
<dbReference type="OMA" id="WKFPAKE"/>
<dbReference type="PhylomeDB" id="Q9FE91"/>
<dbReference type="PRO" id="PR:Q9FE91"/>
<dbReference type="Proteomes" id="UP000006548">
    <property type="component" value="Chromosome 5"/>
</dbReference>
<dbReference type="ExpressionAtlas" id="Q9FE91">
    <property type="expression patterns" value="baseline and differential"/>
</dbReference>
<dbReference type="GO" id="GO:0003677">
    <property type="term" value="F:DNA binding"/>
    <property type="evidence" value="ECO:0007669"/>
    <property type="project" value="UniProtKB-KW"/>
</dbReference>
<dbReference type="GO" id="GO:0008270">
    <property type="term" value="F:zinc ion binding"/>
    <property type="evidence" value="ECO:0007669"/>
    <property type="project" value="UniProtKB-KW"/>
</dbReference>
<dbReference type="Gene3D" id="2.130.10.10">
    <property type="entry name" value="YVTN repeat-like/Quinoprotein amine dehydrogenase"/>
    <property type="match status" value="1"/>
</dbReference>
<dbReference type="InterPro" id="IPR020472">
    <property type="entry name" value="G-protein_beta_WD-40_rep"/>
</dbReference>
<dbReference type="InterPro" id="IPR015943">
    <property type="entry name" value="WD40/YVTN_repeat-like_dom_sf"/>
</dbReference>
<dbReference type="InterPro" id="IPR019775">
    <property type="entry name" value="WD40_repeat_CS"/>
</dbReference>
<dbReference type="InterPro" id="IPR036322">
    <property type="entry name" value="WD40_repeat_dom_sf"/>
</dbReference>
<dbReference type="InterPro" id="IPR001680">
    <property type="entry name" value="WD40_rpt"/>
</dbReference>
<dbReference type="InterPro" id="IPR044715">
    <property type="entry name" value="WDR86-like"/>
</dbReference>
<dbReference type="InterPro" id="IPR000571">
    <property type="entry name" value="Znf_CCCH"/>
</dbReference>
<dbReference type="InterPro" id="IPR036855">
    <property type="entry name" value="Znf_CCCH_sf"/>
</dbReference>
<dbReference type="PANTHER" id="PTHR44489">
    <property type="match status" value="1"/>
</dbReference>
<dbReference type="PANTHER" id="PTHR44489:SF14">
    <property type="entry name" value="ZINC FINGER CCCH DOMAIN-CONTAINING PROTEIN 59-RELATED"/>
    <property type="match status" value="1"/>
</dbReference>
<dbReference type="Pfam" id="PF00400">
    <property type="entry name" value="WD40"/>
    <property type="match status" value="3"/>
</dbReference>
<dbReference type="Pfam" id="PF00642">
    <property type="entry name" value="zf-CCCH"/>
    <property type="match status" value="1"/>
</dbReference>
<dbReference type="PRINTS" id="PR00320">
    <property type="entry name" value="GPROTEINBRPT"/>
</dbReference>
<dbReference type="SMART" id="SM00320">
    <property type="entry name" value="WD40"/>
    <property type="match status" value="6"/>
</dbReference>
<dbReference type="SMART" id="SM00356">
    <property type="entry name" value="ZnF_C3H1"/>
    <property type="match status" value="1"/>
</dbReference>
<dbReference type="SUPFAM" id="SSF90229">
    <property type="entry name" value="CCCH zinc finger"/>
    <property type="match status" value="1"/>
</dbReference>
<dbReference type="SUPFAM" id="SSF50978">
    <property type="entry name" value="WD40 repeat-like"/>
    <property type="match status" value="1"/>
</dbReference>
<dbReference type="PROSITE" id="PS00678">
    <property type="entry name" value="WD_REPEATS_1"/>
    <property type="match status" value="2"/>
</dbReference>
<dbReference type="PROSITE" id="PS50082">
    <property type="entry name" value="WD_REPEATS_2"/>
    <property type="match status" value="2"/>
</dbReference>
<dbReference type="PROSITE" id="PS50294">
    <property type="entry name" value="WD_REPEATS_REGION"/>
    <property type="match status" value="1"/>
</dbReference>
<dbReference type="PROSITE" id="PS50103">
    <property type="entry name" value="ZF_C3H1"/>
    <property type="match status" value="1"/>
</dbReference>
<sequence>MDYKAPRRYYSHGVVARQQDFATDIVTRRRPYVPYDRPNKFSRSLVWTSKEYKSPEGNNMPRTNDVSPKPPVLGLARKNAACGPMRSSSLRKWVCKYWKDGKCKRGEQCQFLHSWSCFPGLAMVASLEGHNKELKGIALPEGSDKLFSVSIDGTLRVWDCNSGQCVHSINLDAEAGSLISEGPWVFLGLPNAIKAFNVQTSQDLHLQAAGVVGQVNAMTIANGMLFAGTSSGSILVWKATTDSESDPFKYLTSLEGHSGEVTCFAVGGQMLYSGSVDKTIKMWDLNTLQCIMTLKQHTGTVTSLLCWDKCLISSSLDGTIKVWAYSENGILKVVQTRRQEQSSVHALSGMHDAEAKPIIFCSYQNGTVGIFDLPSFQERGRMFSTHTIATLTIGPQGLLFSGDESGNLRVWTLAAGNKV</sequence>
<name>C3H62_ARATH</name>
<keyword id="KW-0238">DNA-binding</keyword>
<keyword id="KW-0479">Metal-binding</keyword>
<keyword id="KW-1185">Reference proteome</keyword>
<keyword id="KW-0677">Repeat</keyword>
<keyword id="KW-0853">WD repeat</keyword>
<keyword id="KW-0862">Zinc</keyword>
<keyword id="KW-0863">Zinc-finger</keyword>